<reference key="1">
    <citation type="journal article" date="2003" name="Nature">
        <title>Genome sequence of Bacillus cereus and comparative analysis with Bacillus anthracis.</title>
        <authorList>
            <person name="Ivanova N."/>
            <person name="Sorokin A."/>
            <person name="Anderson I."/>
            <person name="Galleron N."/>
            <person name="Candelon B."/>
            <person name="Kapatral V."/>
            <person name="Bhattacharyya A."/>
            <person name="Reznik G."/>
            <person name="Mikhailova N."/>
            <person name="Lapidus A."/>
            <person name="Chu L."/>
            <person name="Mazur M."/>
            <person name="Goltsman E."/>
            <person name="Larsen N."/>
            <person name="D'Souza M."/>
            <person name="Walunas T."/>
            <person name="Grechkin Y."/>
            <person name="Pusch G."/>
            <person name="Haselkorn R."/>
            <person name="Fonstein M."/>
            <person name="Ehrlich S.D."/>
            <person name="Overbeek R."/>
            <person name="Kyrpides N.C."/>
        </authorList>
    </citation>
    <scope>NUCLEOTIDE SEQUENCE [LARGE SCALE GENOMIC DNA]</scope>
    <source>
        <strain>ATCC 14579 / DSM 31 / CCUG 7414 / JCM 2152 / NBRC 15305 / NCIMB 9373 / NCTC 2599 / NRRL B-3711</strain>
    </source>
</reference>
<reference key="2">
    <citation type="journal article" date="2009" name="J. Bacteriol.">
        <title>A widely conserved gene cluster required for lactate utilization in Bacillus subtilis and its involvement in biofilm formation.</title>
        <authorList>
            <person name="Chai Y."/>
            <person name="Kolter R."/>
            <person name="Losick R."/>
        </authorList>
    </citation>
    <scope>FUNCTION BY COMPLEMENTATION OF B.SUBTILIS LUTABC OPERON</scope>
</reference>
<sequence>MTGLIQNRDAFLDNIAKELGRARKTEGVERPVWKSNVNIETLKDYSQEELLEVFKKQCTNIHTTVVETTNDRLGEDLQKVIMENGGGPILLSADDRFDAYGLTSLFKEELPKRDVEVNVWDPERKDENMRLAEKANIGIAFSDYTLAESGTIVVQSHKGQGRSLHFLPTVYFAIIPRETLVPRITQAVQDMNSHVENGETAASCINFITGPSNSADIEMNLVVGVHGPLKAVYFIV</sequence>
<keyword id="KW-1185">Reference proteome</keyword>
<evidence type="ECO:0000255" key="1">
    <source>
        <dbReference type="HAMAP-Rule" id="MF_02104"/>
    </source>
</evidence>
<evidence type="ECO:0000269" key="2">
    <source>
    </source>
</evidence>
<accession>Q81GA3</accession>
<name>LUTC_BACCR</name>
<comment type="function">
    <text evidence="1 2">Is involved in L-lactate degradation and allows cells to grow with lactate as the sole carbon source.</text>
</comment>
<comment type="similarity">
    <text evidence="1">Belongs to the LutC/YkgG family.</text>
</comment>
<feature type="chain" id="PRO_0000384001" description="Lactate utilization protein C">
    <location>
        <begin position="1"/>
        <end position="236"/>
    </location>
</feature>
<protein>
    <recommendedName>
        <fullName evidence="1">Lactate utilization protein C</fullName>
    </recommendedName>
</protein>
<gene>
    <name evidence="1" type="primary">lutC</name>
    <name type="ordered locus">BC_1305</name>
</gene>
<dbReference type="EMBL" id="AE016877">
    <property type="protein sequence ID" value="AAP08288.1"/>
    <property type="molecule type" value="Genomic_DNA"/>
</dbReference>
<dbReference type="RefSeq" id="NP_831087.1">
    <property type="nucleotide sequence ID" value="NC_004722.1"/>
</dbReference>
<dbReference type="RefSeq" id="WP_000147185.1">
    <property type="nucleotide sequence ID" value="NC_004722.1"/>
</dbReference>
<dbReference type="SMR" id="Q81GA3"/>
<dbReference type="STRING" id="226900.BC_1305"/>
<dbReference type="KEGG" id="bce:BC1305"/>
<dbReference type="PATRIC" id="fig|226900.8.peg.1278"/>
<dbReference type="HOGENOM" id="CLU_090664_1_0_9"/>
<dbReference type="OrthoDB" id="9794157at2"/>
<dbReference type="Proteomes" id="UP000001417">
    <property type="component" value="Chromosome"/>
</dbReference>
<dbReference type="GO" id="GO:0006089">
    <property type="term" value="P:lactate metabolic process"/>
    <property type="evidence" value="ECO:0007669"/>
    <property type="project" value="UniProtKB-UniRule"/>
</dbReference>
<dbReference type="Gene3D" id="3.40.50.10420">
    <property type="entry name" value="NagB/RpiA/CoA transferase-like"/>
    <property type="match status" value="1"/>
</dbReference>
<dbReference type="HAMAP" id="MF_02104">
    <property type="entry name" value="LutC"/>
    <property type="match status" value="1"/>
</dbReference>
<dbReference type="InterPro" id="IPR024185">
    <property type="entry name" value="FTHF_cligase-like_sf"/>
</dbReference>
<dbReference type="InterPro" id="IPR003741">
    <property type="entry name" value="LUD_dom"/>
</dbReference>
<dbReference type="InterPro" id="IPR022823">
    <property type="entry name" value="LutC"/>
</dbReference>
<dbReference type="InterPro" id="IPR037171">
    <property type="entry name" value="NagB/RpiA_transferase-like"/>
</dbReference>
<dbReference type="PANTHER" id="PTHR43682">
    <property type="entry name" value="LACTATE UTILIZATION PROTEIN C"/>
    <property type="match status" value="1"/>
</dbReference>
<dbReference type="PANTHER" id="PTHR43682:SF1">
    <property type="entry name" value="LACTATE UTILIZATION PROTEIN C"/>
    <property type="match status" value="1"/>
</dbReference>
<dbReference type="Pfam" id="PF02589">
    <property type="entry name" value="LUD_dom"/>
    <property type="match status" value="1"/>
</dbReference>
<dbReference type="SUPFAM" id="SSF100950">
    <property type="entry name" value="NagB/RpiA/CoA transferase-like"/>
    <property type="match status" value="1"/>
</dbReference>
<proteinExistence type="inferred from homology"/>
<organism>
    <name type="scientific">Bacillus cereus (strain ATCC 14579 / DSM 31 / CCUG 7414 / JCM 2152 / NBRC 15305 / NCIMB 9373 / NCTC 2599 / NRRL B-3711)</name>
    <dbReference type="NCBI Taxonomy" id="226900"/>
    <lineage>
        <taxon>Bacteria</taxon>
        <taxon>Bacillati</taxon>
        <taxon>Bacillota</taxon>
        <taxon>Bacilli</taxon>
        <taxon>Bacillales</taxon>
        <taxon>Bacillaceae</taxon>
        <taxon>Bacillus</taxon>
        <taxon>Bacillus cereus group</taxon>
    </lineage>
</organism>